<protein>
    <recommendedName>
        <fullName evidence="5">Glutamine--tRNA ligase protein virJ</fullName>
        <ecNumber evidence="1">6.1.1.18</ecNumber>
    </recommendedName>
    <alternativeName>
        <fullName evidence="5">Trichoxide biosynthesis protein virJ</fullName>
    </alternativeName>
    <alternativeName>
        <fullName evidence="5">Virensol biosynthesis cluster protein J</fullName>
    </alternativeName>
</protein>
<reference key="1">
    <citation type="journal article" date="2011" name="Genome Biol.">
        <title>Comparative genome sequence analysis underscores mycoparasitism as the ancestral life style of Trichoderma.</title>
        <authorList>
            <person name="Kubicek C.P."/>
            <person name="Herrera-Estrella A."/>
            <person name="Seidl-Seiboth V."/>
            <person name="Martinez D.A."/>
            <person name="Druzhinina I.S."/>
            <person name="Thon M."/>
            <person name="Zeilinger S."/>
            <person name="Casas-Flores S."/>
            <person name="Horwitz B.A."/>
            <person name="Mukherjee P.K."/>
            <person name="Mukherjee M."/>
            <person name="Kredics L."/>
            <person name="Alcaraz L.D."/>
            <person name="Aerts A."/>
            <person name="Antal Z."/>
            <person name="Atanasova L."/>
            <person name="Cervantes-Badillo M.G."/>
            <person name="Challacombe J."/>
            <person name="Chertkov O."/>
            <person name="McCluskey K."/>
            <person name="Coulpier F."/>
            <person name="Deshpande N."/>
            <person name="von Doehren H."/>
            <person name="Ebbole D.J."/>
            <person name="Esquivel-Naranjo E.U."/>
            <person name="Fekete E."/>
            <person name="Flipphi M."/>
            <person name="Glaser F."/>
            <person name="Gomez-Rodriguez E.Y."/>
            <person name="Gruber S."/>
            <person name="Han C."/>
            <person name="Henrissat B."/>
            <person name="Hermosa R."/>
            <person name="Hernandez-Onate M."/>
            <person name="Karaffa L."/>
            <person name="Kosti I."/>
            <person name="Le Crom S."/>
            <person name="Lindquist E."/>
            <person name="Lucas S."/>
            <person name="Luebeck M."/>
            <person name="Luebeck P.S."/>
            <person name="Margeot A."/>
            <person name="Metz B."/>
            <person name="Misra M."/>
            <person name="Nevalainen H."/>
            <person name="Omann M."/>
            <person name="Packer N."/>
            <person name="Perrone G."/>
            <person name="Uresti-Rivera E.E."/>
            <person name="Salamov A."/>
            <person name="Schmoll M."/>
            <person name="Seiboth B."/>
            <person name="Shapiro H."/>
            <person name="Sukno S."/>
            <person name="Tamayo-Ramos J.A."/>
            <person name="Tisch D."/>
            <person name="Wiest A."/>
            <person name="Wilkinson H.H."/>
            <person name="Zhang M."/>
            <person name="Coutinho P.M."/>
            <person name="Kenerley C.M."/>
            <person name="Monte E."/>
            <person name="Baker S.E."/>
            <person name="Grigoriev I.V."/>
        </authorList>
    </citation>
    <scope>NUCLEOTIDE SEQUENCE [LARGE SCALE GENOMIC DNA]</scope>
    <source>
        <strain>Gv29-8 / FGSC 10586</strain>
    </source>
</reference>
<reference key="2">
    <citation type="journal article" date="2019" name="J. Am. Chem. Soc.">
        <title>Fungal highly reducing polyketide synthases biosynthesize salicylaldehydes that are precursors to epoxycyclohexenol natural products.</title>
        <authorList>
            <person name="Liu L."/>
            <person name="Tang M.C."/>
            <person name="Tang Y."/>
        </authorList>
    </citation>
    <scope>FUNCTION</scope>
</reference>
<gene>
    <name evidence="5" type="primary">virJ</name>
    <name type="ORF">TRIVIDRAFT_81025</name>
</gene>
<sequence>MADAVAEAVAKLVLDDETGEMVTKNELKKRIQKRARKAAAAANRSNAQQEKGNKPAANKPAAKPEERVIDPDAMFKQGFLGDVFKLRPEESVVTRFPPEPNGYLHLGHAKAIAVNFGFAKYHGGRTQQQLDGQINYIPTDVADSRFDDTNPDAEKGEYFVAIEDTIRWLGFTPSEITYASDNYQRMYDLAEELIKMEKAYVCHCDDVETKKQRGGEDGLFPRYRCEHAKQDVETNLKKFRGMRDGEYAPRSAWLRMKQDIENNPNPQMWDLAAYRIPKDQEPHFRTGTKWRIYPTYDFAHCLCDSFEGITHSLCTTEFIMSRESYEWLNKLLVEFQPMQREYGRLNLSGTIMSKRGLRTLIENNVVRGWDDPRLYTIKGIRRRGIPPGALLSFIYELGVTTSITQVSIKRFEQSIRVYLEKTVPRLMLVLDPVPVVIEDGEEQDLDIPFSPKDPKLGSHTIRLTKTVYIDRSDFREVDSKDYFRLAPGKTVGLLNVPYPIKAVSFTKDETTGAIKEIKAVYDKEGKKPKTYIQWVPEGSLPAEVRIHEALFKSDSPGSAPGGLLSDVNPNSETIWPNALIETGFHEVKRRAPWPEAEGEKTGEFHPETVRFQAMRVAYFALDSDSTDEKIVLNRIVPLKEDSGKSS</sequence>
<comment type="function">
    <text evidence="4">Glutamine--tRNA ligase; part of the gene cluster that mediates the biosynthesis of virensols and trichoxide, fungal natural products that contain or are derived from a salicylaldehyde core (PubMed:31790246). VirJ does not seem to play any role in virensols and trichoxide biosynthesis (PubMed:31790246).</text>
</comment>
<comment type="catalytic activity">
    <reaction evidence="1">
        <text>tRNA(Gln) + L-glutamine + ATP = L-glutaminyl-tRNA(Gln) + AMP + diphosphate</text>
        <dbReference type="Rhea" id="RHEA:20121"/>
        <dbReference type="Rhea" id="RHEA-COMP:9662"/>
        <dbReference type="Rhea" id="RHEA-COMP:9681"/>
        <dbReference type="ChEBI" id="CHEBI:30616"/>
        <dbReference type="ChEBI" id="CHEBI:33019"/>
        <dbReference type="ChEBI" id="CHEBI:58359"/>
        <dbReference type="ChEBI" id="CHEBI:78442"/>
        <dbReference type="ChEBI" id="CHEBI:78521"/>
        <dbReference type="ChEBI" id="CHEBI:456215"/>
        <dbReference type="EC" id="6.1.1.18"/>
    </reaction>
</comment>
<comment type="similarity">
    <text evidence="6">Belongs to the class-I aminoacyl-tRNA synthetase family.</text>
</comment>
<accession>G9N4A3</accession>
<dbReference type="EC" id="6.1.1.18" evidence="1"/>
<dbReference type="EMBL" id="ABDF02000086">
    <property type="protein sequence ID" value="EHK18429.1"/>
    <property type="molecule type" value="Genomic_DNA"/>
</dbReference>
<dbReference type="RefSeq" id="XP_013952629.1">
    <property type="nucleotide sequence ID" value="XM_014097154.1"/>
</dbReference>
<dbReference type="SMR" id="G9N4A3"/>
<dbReference type="FunCoup" id="G9N4A3">
    <property type="interactions" value="1300"/>
</dbReference>
<dbReference type="STRING" id="413071.G9N4A3"/>
<dbReference type="EnsemblFungi" id="EHK18429">
    <property type="protein sequence ID" value="EHK18429"/>
    <property type="gene ID" value="TRIVIDRAFT_81025"/>
</dbReference>
<dbReference type="GeneID" id="25798224"/>
<dbReference type="VEuPathDB" id="FungiDB:TRIVIDRAFT_81025"/>
<dbReference type="eggNOG" id="KOG1148">
    <property type="taxonomic scope" value="Eukaryota"/>
</dbReference>
<dbReference type="HOGENOM" id="CLU_001882_2_3_1"/>
<dbReference type="InParanoid" id="G9N4A3"/>
<dbReference type="OMA" id="FAWRIMG"/>
<dbReference type="OrthoDB" id="10250478at2759"/>
<dbReference type="Proteomes" id="UP000007115">
    <property type="component" value="Unassembled WGS sequence"/>
</dbReference>
<dbReference type="GO" id="GO:0005829">
    <property type="term" value="C:cytosol"/>
    <property type="evidence" value="ECO:0007669"/>
    <property type="project" value="EnsemblFungi"/>
</dbReference>
<dbReference type="GO" id="GO:0005739">
    <property type="term" value="C:mitochondrion"/>
    <property type="evidence" value="ECO:0007669"/>
    <property type="project" value="EnsemblFungi"/>
</dbReference>
<dbReference type="GO" id="GO:0005524">
    <property type="term" value="F:ATP binding"/>
    <property type="evidence" value="ECO:0007669"/>
    <property type="project" value="UniProtKB-KW"/>
</dbReference>
<dbReference type="GO" id="GO:0004819">
    <property type="term" value="F:glutamine-tRNA ligase activity"/>
    <property type="evidence" value="ECO:0007669"/>
    <property type="project" value="UniProtKB-EC"/>
</dbReference>
<dbReference type="GO" id="GO:1990825">
    <property type="term" value="F:sequence-specific mRNA binding"/>
    <property type="evidence" value="ECO:0007669"/>
    <property type="project" value="EnsemblFungi"/>
</dbReference>
<dbReference type="GO" id="GO:0006425">
    <property type="term" value="P:glutaminyl-tRNA aminoacylation"/>
    <property type="evidence" value="ECO:0007669"/>
    <property type="project" value="EnsemblFungi"/>
</dbReference>
<dbReference type="FunFam" id="2.40.240.10:FF:000007">
    <property type="entry name" value="Glutamine--tRNA ligase"/>
    <property type="match status" value="1"/>
</dbReference>
<dbReference type="FunFam" id="2.40.240.10:FF:000015">
    <property type="entry name" value="Glutaminyl-tRNA synthetase"/>
    <property type="match status" value="1"/>
</dbReference>
<dbReference type="FunFam" id="3.40.50.620:FF:000183">
    <property type="entry name" value="Glutaminyl-tRNA synthetase"/>
    <property type="match status" value="1"/>
</dbReference>
<dbReference type="Gene3D" id="3.40.50.620">
    <property type="entry name" value="HUPs"/>
    <property type="match status" value="1"/>
</dbReference>
<dbReference type="Gene3D" id="2.40.240.10">
    <property type="entry name" value="Ribosomal Protein L25, Chain P"/>
    <property type="match status" value="2"/>
</dbReference>
<dbReference type="InterPro" id="IPR001412">
    <property type="entry name" value="aa-tRNA-synth_I_CS"/>
</dbReference>
<dbReference type="InterPro" id="IPR004514">
    <property type="entry name" value="Gln-tRNA-synth"/>
</dbReference>
<dbReference type="InterPro" id="IPR050132">
    <property type="entry name" value="Gln/Glu-tRNA_Ligase"/>
</dbReference>
<dbReference type="InterPro" id="IPR000924">
    <property type="entry name" value="Glu/Gln-tRNA-synth"/>
</dbReference>
<dbReference type="InterPro" id="IPR020058">
    <property type="entry name" value="Glu/Gln-tRNA-synth_Ib_cat-dom"/>
</dbReference>
<dbReference type="InterPro" id="IPR020059">
    <property type="entry name" value="Glu/Gln-tRNA-synth_Ib_codon-bd"/>
</dbReference>
<dbReference type="InterPro" id="IPR020056">
    <property type="entry name" value="Rbsml_bL25/Gln-tRNA_synth_N"/>
</dbReference>
<dbReference type="InterPro" id="IPR011035">
    <property type="entry name" value="Ribosomal_bL25/Gln-tRNA_synth"/>
</dbReference>
<dbReference type="InterPro" id="IPR014729">
    <property type="entry name" value="Rossmann-like_a/b/a_fold"/>
</dbReference>
<dbReference type="InterPro" id="IPR049437">
    <property type="entry name" value="tRNA-synt_1c_C2"/>
</dbReference>
<dbReference type="NCBIfam" id="TIGR00440">
    <property type="entry name" value="glnS"/>
    <property type="match status" value="1"/>
</dbReference>
<dbReference type="PANTHER" id="PTHR43097:SF4">
    <property type="entry name" value="GLUTAMINE--TRNA LIGASE"/>
    <property type="match status" value="1"/>
</dbReference>
<dbReference type="PANTHER" id="PTHR43097">
    <property type="entry name" value="GLUTAMINE-TRNA LIGASE"/>
    <property type="match status" value="1"/>
</dbReference>
<dbReference type="Pfam" id="PF00749">
    <property type="entry name" value="tRNA-synt_1c"/>
    <property type="match status" value="1"/>
</dbReference>
<dbReference type="Pfam" id="PF03950">
    <property type="entry name" value="tRNA-synt_1c_C"/>
    <property type="match status" value="1"/>
</dbReference>
<dbReference type="Pfam" id="PF20974">
    <property type="entry name" value="tRNA-synt_1c_C2"/>
    <property type="match status" value="1"/>
</dbReference>
<dbReference type="PRINTS" id="PR00987">
    <property type="entry name" value="TRNASYNTHGLU"/>
</dbReference>
<dbReference type="SUPFAM" id="SSF52374">
    <property type="entry name" value="Nucleotidylyl transferase"/>
    <property type="match status" value="1"/>
</dbReference>
<dbReference type="SUPFAM" id="SSF50715">
    <property type="entry name" value="Ribosomal protein L25-like"/>
    <property type="match status" value="1"/>
</dbReference>
<dbReference type="PROSITE" id="PS00178">
    <property type="entry name" value="AA_TRNA_LIGASE_I"/>
    <property type="match status" value="1"/>
</dbReference>
<name>VIRJ_HYPVG</name>
<feature type="chain" id="PRO_0000449288" description="Glutamine--tRNA ligase protein virJ">
    <location>
        <begin position="1"/>
        <end position="646"/>
    </location>
</feature>
<feature type="region of interest" description="Disordered" evidence="3">
    <location>
        <begin position="25"/>
        <end position="65"/>
    </location>
</feature>
<feature type="short sequence motif" description="'HIGH' region" evidence="2">
    <location>
        <begin position="98"/>
        <end position="108"/>
    </location>
</feature>
<feature type="short sequence motif" description="'KMSKS' region" evidence="2">
    <location>
        <begin position="351"/>
        <end position="355"/>
    </location>
</feature>
<feature type="compositionally biased region" description="Low complexity" evidence="3">
    <location>
        <begin position="38"/>
        <end position="61"/>
    </location>
</feature>
<feature type="binding site" evidence="1">
    <location>
        <begin position="99"/>
        <end position="101"/>
    </location>
    <ligand>
        <name>ATP</name>
        <dbReference type="ChEBI" id="CHEBI:30616"/>
    </ligand>
</feature>
<feature type="binding site" evidence="1">
    <location>
        <begin position="105"/>
        <end position="111"/>
    </location>
    <ligand>
        <name>ATP</name>
        <dbReference type="ChEBI" id="CHEBI:30616"/>
    </ligand>
</feature>
<feature type="binding site" evidence="1">
    <location>
        <position position="147"/>
    </location>
    <ligand>
        <name>L-glutamine</name>
        <dbReference type="ChEBI" id="CHEBI:58359"/>
    </ligand>
</feature>
<feature type="binding site" evidence="1">
    <location>
        <position position="296"/>
    </location>
    <ligand>
        <name>L-glutamine</name>
        <dbReference type="ChEBI" id="CHEBI:58359"/>
    </ligand>
</feature>
<feature type="binding site" evidence="1">
    <location>
        <position position="315"/>
    </location>
    <ligand>
        <name>ATP</name>
        <dbReference type="ChEBI" id="CHEBI:30616"/>
    </ligand>
</feature>
<feature type="binding site" evidence="1">
    <location>
        <begin position="344"/>
        <end position="345"/>
    </location>
    <ligand>
        <name>ATP</name>
        <dbReference type="ChEBI" id="CHEBI:30616"/>
    </ligand>
</feature>
<feature type="binding site" evidence="1">
    <location>
        <begin position="352"/>
        <end position="354"/>
    </location>
    <ligand>
        <name>ATP</name>
        <dbReference type="ChEBI" id="CHEBI:30616"/>
    </ligand>
</feature>
<organism>
    <name type="scientific">Hypocrea virens (strain Gv29-8 / FGSC 10586)</name>
    <name type="common">Gliocladium virens</name>
    <name type="synonym">Trichoderma virens</name>
    <dbReference type="NCBI Taxonomy" id="413071"/>
    <lineage>
        <taxon>Eukaryota</taxon>
        <taxon>Fungi</taxon>
        <taxon>Dikarya</taxon>
        <taxon>Ascomycota</taxon>
        <taxon>Pezizomycotina</taxon>
        <taxon>Sordariomycetes</taxon>
        <taxon>Hypocreomycetidae</taxon>
        <taxon>Hypocreales</taxon>
        <taxon>Hypocreaceae</taxon>
        <taxon>Trichoderma</taxon>
    </lineage>
</organism>
<proteinExistence type="inferred from homology"/>
<evidence type="ECO:0000250" key="1">
    <source>
        <dbReference type="UniProtKB" id="P00962"/>
    </source>
</evidence>
<evidence type="ECO:0000250" key="2">
    <source>
        <dbReference type="UniProtKB" id="P13188"/>
    </source>
</evidence>
<evidence type="ECO:0000256" key="3">
    <source>
        <dbReference type="SAM" id="MobiDB-lite"/>
    </source>
</evidence>
<evidence type="ECO:0000269" key="4">
    <source>
    </source>
</evidence>
<evidence type="ECO:0000303" key="5">
    <source>
    </source>
</evidence>
<evidence type="ECO:0000305" key="6"/>
<keyword id="KW-0030">Aminoacyl-tRNA synthetase</keyword>
<keyword id="KW-0067">ATP-binding</keyword>
<keyword id="KW-0436">Ligase</keyword>
<keyword id="KW-0547">Nucleotide-binding</keyword>
<keyword id="KW-0648">Protein biosynthesis</keyword>
<keyword id="KW-1185">Reference proteome</keyword>